<proteinExistence type="inferred from homology"/>
<keyword id="KW-0067">ATP-binding</keyword>
<keyword id="KW-0119">Carbohydrate metabolism</keyword>
<keyword id="KW-0418">Kinase</keyword>
<keyword id="KW-0479">Metal-binding</keyword>
<keyword id="KW-0547">Nucleotide-binding</keyword>
<keyword id="KW-0808">Transferase</keyword>
<keyword id="KW-0862">Zinc</keyword>
<sequence length="303" mass="33085">MYYGFDIGGTKIALGVFDSGRQLQWEKRVPTPRDSYDAFLDAVCELVAEADRRFGCKGSVGIGIPGMPETEDGTLYAANVPAASGKPLRADLSARLDRDVRLDNDANCFALSEAWDDEFTQYPLVMGLILGTGVGGGLIFNGKPITGKSYITGEFGHMRLPVDALTMMGLDFPLRRCGCGQHGCIENYLSGRGFAWLYQHYYHQPLQAPEIIALYDQGDEQARAHVERYLDLLAVCLGNILTIVDPDLVVIGGGLSNFPAITTQLAERLPRHLLPVARVPRIERARHGDAGGMRGAAFLHLTD</sequence>
<comment type="function">
    <text evidence="1">Catalyzes the phosphorylation of N-acetyl-D-glucosamine (GlcNAc) derived from cell-wall degradation, yielding GlcNAc-6-P.</text>
</comment>
<comment type="catalytic activity">
    <reaction evidence="1">
        <text>N-acetyl-D-glucosamine + ATP = N-acetyl-D-glucosamine 6-phosphate + ADP + H(+)</text>
        <dbReference type="Rhea" id="RHEA:17417"/>
        <dbReference type="ChEBI" id="CHEBI:15378"/>
        <dbReference type="ChEBI" id="CHEBI:30616"/>
        <dbReference type="ChEBI" id="CHEBI:57513"/>
        <dbReference type="ChEBI" id="CHEBI:456216"/>
        <dbReference type="ChEBI" id="CHEBI:506227"/>
        <dbReference type="EC" id="2.7.1.59"/>
    </reaction>
</comment>
<comment type="pathway">
    <text evidence="1">Cell wall biogenesis; peptidoglycan recycling.</text>
</comment>
<comment type="similarity">
    <text evidence="1">Belongs to the ROK (NagC/XylR) family. NagK subfamily.</text>
</comment>
<accession>Q1RD35</accession>
<feature type="chain" id="PRO_0000270104" description="N-acetyl-D-glucosamine kinase">
    <location>
        <begin position="1"/>
        <end position="303"/>
    </location>
</feature>
<feature type="binding site" evidence="1">
    <location>
        <begin position="4"/>
        <end position="11"/>
    </location>
    <ligand>
        <name>ATP</name>
        <dbReference type="ChEBI" id="CHEBI:30616"/>
    </ligand>
</feature>
<feature type="binding site" evidence="1">
    <location>
        <begin position="133"/>
        <end position="140"/>
    </location>
    <ligand>
        <name>ATP</name>
        <dbReference type="ChEBI" id="CHEBI:30616"/>
    </ligand>
</feature>
<feature type="binding site" evidence="1">
    <location>
        <position position="157"/>
    </location>
    <ligand>
        <name>Zn(2+)</name>
        <dbReference type="ChEBI" id="CHEBI:29105"/>
    </ligand>
</feature>
<feature type="binding site" evidence="1">
    <location>
        <position position="177"/>
    </location>
    <ligand>
        <name>Zn(2+)</name>
        <dbReference type="ChEBI" id="CHEBI:29105"/>
    </ligand>
</feature>
<feature type="binding site" evidence="1">
    <location>
        <position position="179"/>
    </location>
    <ligand>
        <name>Zn(2+)</name>
        <dbReference type="ChEBI" id="CHEBI:29105"/>
    </ligand>
</feature>
<feature type="binding site" evidence="1">
    <location>
        <position position="184"/>
    </location>
    <ligand>
        <name>Zn(2+)</name>
        <dbReference type="ChEBI" id="CHEBI:29105"/>
    </ligand>
</feature>
<reference key="1">
    <citation type="journal article" date="2006" name="Proc. Natl. Acad. Sci. U.S.A.">
        <title>Identification of genes subject to positive selection in uropathogenic strains of Escherichia coli: a comparative genomics approach.</title>
        <authorList>
            <person name="Chen S.L."/>
            <person name="Hung C.-S."/>
            <person name="Xu J."/>
            <person name="Reigstad C.S."/>
            <person name="Magrini V."/>
            <person name="Sabo A."/>
            <person name="Blasiar D."/>
            <person name="Bieri T."/>
            <person name="Meyer R.R."/>
            <person name="Ozersky P."/>
            <person name="Armstrong J.R."/>
            <person name="Fulton R.S."/>
            <person name="Latreille J.P."/>
            <person name="Spieth J."/>
            <person name="Hooton T.M."/>
            <person name="Mardis E.R."/>
            <person name="Hultgren S.J."/>
            <person name="Gordon J.I."/>
        </authorList>
    </citation>
    <scope>NUCLEOTIDE SEQUENCE [LARGE SCALE GENOMIC DNA]</scope>
    <source>
        <strain>UTI89 / UPEC</strain>
    </source>
</reference>
<evidence type="ECO:0000255" key="1">
    <source>
        <dbReference type="HAMAP-Rule" id="MF_01271"/>
    </source>
</evidence>
<protein>
    <recommendedName>
        <fullName evidence="1">N-acetyl-D-glucosamine kinase</fullName>
        <ecNumber evidence="1">2.7.1.59</ecNumber>
    </recommendedName>
    <alternativeName>
        <fullName evidence="1">GlcNAc kinase</fullName>
    </alternativeName>
</protein>
<gene>
    <name evidence="1" type="primary">nagK</name>
    <name type="ordered locus">UTI89_C1247</name>
</gene>
<dbReference type="EC" id="2.7.1.59" evidence="1"/>
<dbReference type="EMBL" id="CP000243">
    <property type="protein sequence ID" value="ABE06729.1"/>
    <property type="molecule type" value="Genomic_DNA"/>
</dbReference>
<dbReference type="RefSeq" id="WP_000291301.1">
    <property type="nucleotide sequence ID" value="NZ_CP064825.1"/>
</dbReference>
<dbReference type="SMR" id="Q1RD35"/>
<dbReference type="KEGG" id="eci:UTI89_C1247"/>
<dbReference type="HOGENOM" id="CLU_036604_0_3_6"/>
<dbReference type="UniPathway" id="UPA00544"/>
<dbReference type="Proteomes" id="UP000001952">
    <property type="component" value="Chromosome"/>
</dbReference>
<dbReference type="GO" id="GO:0005524">
    <property type="term" value="F:ATP binding"/>
    <property type="evidence" value="ECO:0007669"/>
    <property type="project" value="UniProtKB-UniRule"/>
</dbReference>
<dbReference type="GO" id="GO:0045127">
    <property type="term" value="F:N-acetylglucosamine kinase activity"/>
    <property type="evidence" value="ECO:0007669"/>
    <property type="project" value="UniProtKB-UniRule"/>
</dbReference>
<dbReference type="GO" id="GO:0008270">
    <property type="term" value="F:zinc ion binding"/>
    <property type="evidence" value="ECO:0007669"/>
    <property type="project" value="UniProtKB-UniRule"/>
</dbReference>
<dbReference type="GO" id="GO:0006044">
    <property type="term" value="P:N-acetylglucosamine metabolic process"/>
    <property type="evidence" value="ECO:0007669"/>
    <property type="project" value="UniProtKB-UniRule"/>
</dbReference>
<dbReference type="GO" id="GO:0009254">
    <property type="term" value="P:peptidoglycan turnover"/>
    <property type="evidence" value="ECO:0007669"/>
    <property type="project" value="UniProtKB-UniRule"/>
</dbReference>
<dbReference type="CDD" id="cd24057">
    <property type="entry name" value="ASKHA_NBD_ROK_NAGK"/>
    <property type="match status" value="1"/>
</dbReference>
<dbReference type="FunFam" id="3.30.420.40:FF:000049">
    <property type="entry name" value="N-acetyl-D-glucosamine kinase"/>
    <property type="match status" value="1"/>
</dbReference>
<dbReference type="FunFam" id="3.30.420.40:FF:000051">
    <property type="entry name" value="N-acetyl-D-glucosamine kinase"/>
    <property type="match status" value="1"/>
</dbReference>
<dbReference type="Gene3D" id="3.30.420.40">
    <property type="match status" value="2"/>
</dbReference>
<dbReference type="HAMAP" id="MF_01271">
    <property type="entry name" value="GlcNAc_kinase"/>
    <property type="match status" value="1"/>
</dbReference>
<dbReference type="InterPro" id="IPR043129">
    <property type="entry name" value="ATPase_NBD"/>
</dbReference>
<dbReference type="InterPro" id="IPR023505">
    <property type="entry name" value="N-acetyl-D-glucosamine_kinase"/>
</dbReference>
<dbReference type="InterPro" id="IPR000600">
    <property type="entry name" value="ROK"/>
</dbReference>
<dbReference type="InterPro" id="IPR049874">
    <property type="entry name" value="ROK_cs"/>
</dbReference>
<dbReference type="NCBIfam" id="NF009835">
    <property type="entry name" value="PRK13310.1"/>
    <property type="match status" value="1"/>
</dbReference>
<dbReference type="PANTHER" id="PTHR18964:SF162">
    <property type="entry name" value="N-ACETYL-D-GLUCOSAMINE KINASE"/>
    <property type="match status" value="1"/>
</dbReference>
<dbReference type="PANTHER" id="PTHR18964">
    <property type="entry name" value="ROK (REPRESSOR, ORF, KINASE) FAMILY"/>
    <property type="match status" value="1"/>
</dbReference>
<dbReference type="Pfam" id="PF00480">
    <property type="entry name" value="ROK"/>
    <property type="match status" value="1"/>
</dbReference>
<dbReference type="SUPFAM" id="SSF53067">
    <property type="entry name" value="Actin-like ATPase domain"/>
    <property type="match status" value="1"/>
</dbReference>
<dbReference type="PROSITE" id="PS01125">
    <property type="entry name" value="ROK"/>
    <property type="match status" value="1"/>
</dbReference>
<name>NAGK_ECOUT</name>
<organism>
    <name type="scientific">Escherichia coli (strain UTI89 / UPEC)</name>
    <dbReference type="NCBI Taxonomy" id="364106"/>
    <lineage>
        <taxon>Bacteria</taxon>
        <taxon>Pseudomonadati</taxon>
        <taxon>Pseudomonadota</taxon>
        <taxon>Gammaproteobacteria</taxon>
        <taxon>Enterobacterales</taxon>
        <taxon>Enterobacteriaceae</taxon>
        <taxon>Escherichia</taxon>
    </lineage>
</organism>